<evidence type="ECO:0000255" key="1">
    <source>
        <dbReference type="HAMAP-Rule" id="MF_00217"/>
    </source>
</evidence>
<evidence type="ECO:0000269" key="2">
    <source>
    </source>
</evidence>
<keyword id="KW-0067">ATP-binding</keyword>
<keyword id="KW-0963">Cytoplasm</keyword>
<keyword id="KW-0414">Isoprene biosynthesis</keyword>
<keyword id="KW-0418">Kinase</keyword>
<keyword id="KW-0444">Lipid biosynthesis</keyword>
<keyword id="KW-0443">Lipid metabolism</keyword>
<keyword id="KW-0460">Magnesium</keyword>
<keyword id="KW-0547">Nucleotide-binding</keyword>
<keyword id="KW-1185">Reference proteome</keyword>
<keyword id="KW-0808">Transferase</keyword>
<proteinExistence type="evidence at protein level"/>
<name>MVK_SACS2</name>
<reference key="1">
    <citation type="journal article" date="2001" name="Proc. Natl. Acad. Sci. U.S.A.">
        <title>The complete genome of the crenarchaeon Sulfolobus solfataricus P2.</title>
        <authorList>
            <person name="She Q."/>
            <person name="Singh R.K."/>
            <person name="Confalonieri F."/>
            <person name="Zivanovic Y."/>
            <person name="Allard G."/>
            <person name="Awayez M.J."/>
            <person name="Chan-Weiher C.C.-Y."/>
            <person name="Clausen I.G."/>
            <person name="Curtis B.A."/>
            <person name="De Moors A."/>
            <person name="Erauso G."/>
            <person name="Fletcher C."/>
            <person name="Gordon P.M.K."/>
            <person name="Heikamp-de Jong I."/>
            <person name="Jeffries A.C."/>
            <person name="Kozera C.J."/>
            <person name="Medina N."/>
            <person name="Peng X."/>
            <person name="Thi-Ngoc H.P."/>
            <person name="Redder P."/>
            <person name="Schenk M.E."/>
            <person name="Theriault C."/>
            <person name="Tolstrup N."/>
            <person name="Charlebois R.L."/>
            <person name="Doolittle W.F."/>
            <person name="Duguet M."/>
            <person name="Gaasterland T."/>
            <person name="Garrett R.A."/>
            <person name="Ragan M.A."/>
            <person name="Sensen C.W."/>
            <person name="Van der Oost J."/>
        </authorList>
    </citation>
    <scope>NUCLEOTIDE SEQUENCE [LARGE SCALE GENOMIC DNA]</scope>
    <source>
        <strain>ATCC 35092 / DSM 1617 / JCM 11322 / P2</strain>
    </source>
</reference>
<reference key="2">
    <citation type="journal article" date="2013" name="J. Biochem.">
        <title>Biochemical evidence supporting the presence of the classical mevalonate pathway in the thermoacidophilic archaeon Sulfolobus solfataricus.</title>
        <authorList>
            <person name="Nishimura H."/>
            <person name="Azami Y."/>
            <person name="Miyagawa M."/>
            <person name="Hashimoto C."/>
            <person name="Yoshimura T."/>
            <person name="Hemmi H."/>
        </authorList>
    </citation>
    <scope>FUNCTION</scope>
    <scope>CATALYTIC ACTIVITY</scope>
    <scope>PATHWAY</scope>
    <source>
        <strain>ATCC 35092 / DSM 1617 / JCM 11322 / P2</strain>
    </source>
</reference>
<gene>
    <name evidence="1" type="primary">mvk</name>
    <name type="ordered locus">SSO0383</name>
</gene>
<dbReference type="EC" id="2.7.1.36" evidence="1"/>
<dbReference type="EMBL" id="AE006641">
    <property type="protein sequence ID" value="AAK40711.1"/>
    <property type="molecule type" value="Genomic_DNA"/>
</dbReference>
<dbReference type="PIR" id="H90181">
    <property type="entry name" value="H90181"/>
</dbReference>
<dbReference type="RefSeq" id="WP_010922957.1">
    <property type="nucleotide sequence ID" value="NC_002754.1"/>
</dbReference>
<dbReference type="SMR" id="Q980D2"/>
<dbReference type="FunCoup" id="Q980D2">
    <property type="interactions" value="133"/>
</dbReference>
<dbReference type="STRING" id="273057.SSO0383"/>
<dbReference type="PaxDb" id="273057-SSO0383"/>
<dbReference type="EnsemblBacteria" id="AAK40711">
    <property type="protein sequence ID" value="AAK40711"/>
    <property type="gene ID" value="SSO0383"/>
</dbReference>
<dbReference type="GeneID" id="44129357"/>
<dbReference type="KEGG" id="sso:SSO0383"/>
<dbReference type="PATRIC" id="fig|273057.12.peg.377"/>
<dbReference type="eggNOG" id="arCOG01028">
    <property type="taxonomic scope" value="Archaea"/>
</dbReference>
<dbReference type="HOGENOM" id="CLU_017814_0_0_2"/>
<dbReference type="InParanoid" id="Q980D2"/>
<dbReference type="PhylomeDB" id="Q980D2"/>
<dbReference type="BRENDA" id="2.7.1.36">
    <property type="organism ID" value="6163"/>
</dbReference>
<dbReference type="UniPathway" id="UPA00057">
    <property type="reaction ID" value="UER00098"/>
</dbReference>
<dbReference type="Proteomes" id="UP000001974">
    <property type="component" value="Chromosome"/>
</dbReference>
<dbReference type="GO" id="GO:0005829">
    <property type="term" value="C:cytosol"/>
    <property type="evidence" value="ECO:0000318"/>
    <property type="project" value="GO_Central"/>
</dbReference>
<dbReference type="GO" id="GO:0005524">
    <property type="term" value="F:ATP binding"/>
    <property type="evidence" value="ECO:0007669"/>
    <property type="project" value="UniProtKB-UniRule"/>
</dbReference>
<dbReference type="GO" id="GO:0000287">
    <property type="term" value="F:magnesium ion binding"/>
    <property type="evidence" value="ECO:0007669"/>
    <property type="project" value="UniProtKB-UniRule"/>
</dbReference>
<dbReference type="GO" id="GO:0004496">
    <property type="term" value="F:mevalonate kinase activity"/>
    <property type="evidence" value="ECO:0000318"/>
    <property type="project" value="GO_Central"/>
</dbReference>
<dbReference type="GO" id="GO:0019287">
    <property type="term" value="P:isopentenyl diphosphate biosynthetic process, mevalonate pathway"/>
    <property type="evidence" value="ECO:0000318"/>
    <property type="project" value="GO_Central"/>
</dbReference>
<dbReference type="Gene3D" id="3.30.230.10">
    <property type="match status" value="1"/>
</dbReference>
<dbReference type="Gene3D" id="3.30.70.890">
    <property type="entry name" value="GHMP kinase, C-terminal domain"/>
    <property type="match status" value="1"/>
</dbReference>
<dbReference type="HAMAP" id="MF_00217">
    <property type="entry name" value="Mevalonate_kinase"/>
    <property type="match status" value="1"/>
</dbReference>
<dbReference type="InterPro" id="IPR013750">
    <property type="entry name" value="GHMP_kinase_C_dom"/>
</dbReference>
<dbReference type="InterPro" id="IPR036554">
    <property type="entry name" value="GHMP_kinase_C_sf"/>
</dbReference>
<dbReference type="InterPro" id="IPR006204">
    <property type="entry name" value="GHMP_kinase_N_dom"/>
</dbReference>
<dbReference type="InterPro" id="IPR006205">
    <property type="entry name" value="Mev_gal_kin"/>
</dbReference>
<dbReference type="InterPro" id="IPR022937">
    <property type="entry name" value="Mevalonate_kinase_arc"/>
</dbReference>
<dbReference type="InterPro" id="IPR020568">
    <property type="entry name" value="Ribosomal_Su5_D2-typ_SF"/>
</dbReference>
<dbReference type="InterPro" id="IPR014721">
    <property type="entry name" value="Ribsml_uS5_D2-typ_fold_subgr"/>
</dbReference>
<dbReference type="NCBIfam" id="TIGR00549">
    <property type="entry name" value="mevalon_kin"/>
    <property type="match status" value="1"/>
</dbReference>
<dbReference type="PANTHER" id="PTHR43290">
    <property type="entry name" value="MEVALONATE KINASE"/>
    <property type="match status" value="1"/>
</dbReference>
<dbReference type="PANTHER" id="PTHR43290:SF2">
    <property type="entry name" value="MEVALONATE KINASE"/>
    <property type="match status" value="1"/>
</dbReference>
<dbReference type="Pfam" id="PF08544">
    <property type="entry name" value="GHMP_kinases_C"/>
    <property type="match status" value="1"/>
</dbReference>
<dbReference type="Pfam" id="PF00288">
    <property type="entry name" value="GHMP_kinases_N"/>
    <property type="match status" value="1"/>
</dbReference>
<dbReference type="PRINTS" id="PR00959">
    <property type="entry name" value="MEVGALKINASE"/>
</dbReference>
<dbReference type="SUPFAM" id="SSF55060">
    <property type="entry name" value="GHMP Kinase, C-terminal domain"/>
    <property type="match status" value="1"/>
</dbReference>
<dbReference type="SUPFAM" id="SSF54211">
    <property type="entry name" value="Ribosomal protein S5 domain 2-like"/>
    <property type="match status" value="1"/>
</dbReference>
<organism>
    <name type="scientific">Saccharolobus solfataricus (strain ATCC 35092 / DSM 1617 / JCM 11322 / P2)</name>
    <name type="common">Sulfolobus solfataricus</name>
    <dbReference type="NCBI Taxonomy" id="273057"/>
    <lineage>
        <taxon>Archaea</taxon>
        <taxon>Thermoproteota</taxon>
        <taxon>Thermoprotei</taxon>
        <taxon>Sulfolobales</taxon>
        <taxon>Sulfolobaceae</taxon>
        <taxon>Saccharolobus</taxon>
    </lineage>
</organism>
<protein>
    <recommendedName>
        <fullName evidence="1">Mevalonate kinase</fullName>
        <shortName evidence="1">MK</shortName>
        <shortName evidence="1">MVK</shortName>
        <ecNumber evidence="1">2.7.1.36</ecNumber>
    </recommendedName>
</protein>
<sequence>MMVEAKVPLKLTLFGEHAVVYDRPAIAMTISESLKVKVSENDKFLIISPSLNIKGVKLDLNEMKIESDEAKKVLRYVFEVLNYFEMKKPVKIEINSTVEPSVGLGTSAAVIVGTVAAYSKYLGIDLSRDEIAKISHNIELKVQGIASRMDTYTETYGGLIYFPAGGKGFEKIDTNFELTAGYIRRSMSTADVLWRVRTLKESNKEVFENILDVIGEITNRAKSLIVEQNFEELGLLMYVNHGLLFSLGITSPEADEIVSRAKQLGIKGCKISGGGAGGSIICIKSVEAEVLLRSYNARIVNSTLTKDGVIFSIL</sequence>
<comment type="function">
    <text evidence="1 2">Catalyzes the phosphorylation of (R)-mevalonate (MVA) to (R)-mevalonate 5-phosphate (MVAP). Functions in the mevalonate (MVA) pathway leading to isopentenyl diphosphate (IPP), a key precursor for the biosynthesis of isoprenoid compounds such as archaeal membrane lipids.</text>
</comment>
<comment type="catalytic activity">
    <reaction evidence="1 2">
        <text>(R)-mevalonate + ATP = (R)-5-phosphomevalonate + ADP + H(+)</text>
        <dbReference type="Rhea" id="RHEA:17065"/>
        <dbReference type="ChEBI" id="CHEBI:15378"/>
        <dbReference type="ChEBI" id="CHEBI:30616"/>
        <dbReference type="ChEBI" id="CHEBI:36464"/>
        <dbReference type="ChEBI" id="CHEBI:58146"/>
        <dbReference type="ChEBI" id="CHEBI:456216"/>
        <dbReference type="EC" id="2.7.1.36"/>
    </reaction>
</comment>
<comment type="cofactor">
    <cofactor evidence="1">
        <name>Mg(2+)</name>
        <dbReference type="ChEBI" id="CHEBI:18420"/>
    </cofactor>
</comment>
<comment type="pathway">
    <text evidence="1 2">Isoprenoid biosynthesis; isopentenyl diphosphate biosynthesis via mevalonate pathway; isopentenyl diphosphate from (R)-mevalonate: step 1/3.</text>
</comment>
<comment type="subunit">
    <text evidence="1">Homodimer.</text>
</comment>
<comment type="subcellular location">
    <subcellularLocation>
        <location evidence="1">Cytoplasm</location>
    </subcellularLocation>
</comment>
<comment type="similarity">
    <text evidence="1">Belongs to the GHMP kinase family. Mevalonate kinase subfamily.</text>
</comment>
<feature type="chain" id="PRO_0000429457" description="Mevalonate kinase">
    <location>
        <begin position="1"/>
        <end position="314"/>
    </location>
</feature>
<feature type="active site" description="Proton acceptor" evidence="1">
    <location>
        <position position="150"/>
    </location>
</feature>
<feature type="binding site" evidence="1">
    <location>
        <begin position="103"/>
        <end position="109"/>
    </location>
    <ligand>
        <name>ATP</name>
        <dbReference type="ChEBI" id="CHEBI:30616"/>
    </ligand>
</feature>
<accession>Q980D2</accession>